<protein>
    <recommendedName>
        <fullName evidence="1">ATP synthase subunit delta</fullName>
    </recommendedName>
    <alternativeName>
        <fullName evidence="1">ATP synthase F(1) sector subunit delta</fullName>
    </alternativeName>
    <alternativeName>
        <fullName evidence="1">F-type ATPase subunit delta</fullName>
        <shortName evidence="1">F-ATPase subunit delta</shortName>
    </alternativeName>
</protein>
<sequence>MNKDNLIQNYAVALFNNALLDNIQVKICEEITLLNSIIEDSFEIKKFLFSPLVNKIDKINVFNSLVKTTNFNKIVNNFLLLLIKNSRTHILSNIVEVYNKLLYESRNIKIVHVISTNELQPKEQEWIQSRIEKELQHKTELFFDIDNTIIGGIVIKYDNVLRDYSIKGSLEKIAKCLKNVKIC</sequence>
<dbReference type="EMBL" id="AJ235273">
    <property type="protein sequence ID" value="CAA15230.1"/>
    <property type="molecule type" value="Genomic_DNA"/>
</dbReference>
<dbReference type="PIR" id="F71641">
    <property type="entry name" value="F71641"/>
</dbReference>
<dbReference type="RefSeq" id="NP_221154.1">
    <property type="nucleotide sequence ID" value="NC_000963.1"/>
</dbReference>
<dbReference type="RefSeq" id="WP_004596896.1">
    <property type="nucleotide sequence ID" value="NC_000963.1"/>
</dbReference>
<dbReference type="SMR" id="Q9ZCF2"/>
<dbReference type="STRING" id="272947.gene:17555873"/>
<dbReference type="EnsemblBacteria" id="CAA15230">
    <property type="protein sequence ID" value="CAA15230"/>
    <property type="gene ID" value="CAA15230"/>
</dbReference>
<dbReference type="GeneID" id="57569926"/>
<dbReference type="KEGG" id="rpr:RP804"/>
<dbReference type="PATRIC" id="fig|272947.5.peg.840"/>
<dbReference type="eggNOG" id="COG0712">
    <property type="taxonomic scope" value="Bacteria"/>
</dbReference>
<dbReference type="HOGENOM" id="CLU_085114_1_1_5"/>
<dbReference type="OrthoDB" id="7160553at2"/>
<dbReference type="Proteomes" id="UP000002480">
    <property type="component" value="Chromosome"/>
</dbReference>
<dbReference type="GO" id="GO:0005886">
    <property type="term" value="C:plasma membrane"/>
    <property type="evidence" value="ECO:0007669"/>
    <property type="project" value="UniProtKB-SubCell"/>
</dbReference>
<dbReference type="GO" id="GO:0045259">
    <property type="term" value="C:proton-transporting ATP synthase complex"/>
    <property type="evidence" value="ECO:0007669"/>
    <property type="project" value="UniProtKB-KW"/>
</dbReference>
<dbReference type="GO" id="GO:0046933">
    <property type="term" value="F:proton-transporting ATP synthase activity, rotational mechanism"/>
    <property type="evidence" value="ECO:0007669"/>
    <property type="project" value="UniProtKB-UniRule"/>
</dbReference>
<dbReference type="Gene3D" id="1.10.520.20">
    <property type="entry name" value="N-terminal domain of the delta subunit of the F1F0-ATP synthase"/>
    <property type="match status" value="1"/>
</dbReference>
<dbReference type="HAMAP" id="MF_01416">
    <property type="entry name" value="ATP_synth_delta_bact"/>
    <property type="match status" value="1"/>
</dbReference>
<dbReference type="InterPro" id="IPR026015">
    <property type="entry name" value="ATP_synth_OSCP/delta_N_sf"/>
</dbReference>
<dbReference type="InterPro" id="IPR000711">
    <property type="entry name" value="ATPase_OSCP/dsu"/>
</dbReference>
<dbReference type="NCBIfam" id="TIGR01145">
    <property type="entry name" value="ATP_synt_delta"/>
    <property type="match status" value="1"/>
</dbReference>
<dbReference type="PANTHER" id="PTHR11910">
    <property type="entry name" value="ATP SYNTHASE DELTA CHAIN"/>
    <property type="match status" value="1"/>
</dbReference>
<dbReference type="Pfam" id="PF00213">
    <property type="entry name" value="OSCP"/>
    <property type="match status" value="1"/>
</dbReference>
<dbReference type="PRINTS" id="PR00125">
    <property type="entry name" value="ATPASEDELTA"/>
</dbReference>
<dbReference type="SUPFAM" id="SSF47928">
    <property type="entry name" value="N-terminal domain of the delta subunit of the F1F0-ATP synthase"/>
    <property type="match status" value="1"/>
</dbReference>
<name>ATPD_RICPR</name>
<reference key="1">
    <citation type="journal article" date="1998" name="Nature">
        <title>The genome sequence of Rickettsia prowazekii and the origin of mitochondria.</title>
        <authorList>
            <person name="Andersson S.G.E."/>
            <person name="Zomorodipour A."/>
            <person name="Andersson J.O."/>
            <person name="Sicheritz-Ponten T."/>
            <person name="Alsmark U.C.M."/>
            <person name="Podowski R.M."/>
            <person name="Naeslund A.K."/>
            <person name="Eriksson A.-S."/>
            <person name="Winkler H.H."/>
            <person name="Kurland C.G."/>
        </authorList>
    </citation>
    <scope>NUCLEOTIDE SEQUENCE [LARGE SCALE GENOMIC DNA]</scope>
    <source>
        <strain>Madrid E</strain>
    </source>
</reference>
<feature type="chain" id="PRO_0000193479" description="ATP synthase subunit delta">
    <location>
        <begin position="1"/>
        <end position="183"/>
    </location>
</feature>
<comment type="function">
    <text evidence="1">F(1)F(0) ATP synthase produces ATP from ADP in the presence of a proton or sodium gradient. F-type ATPases consist of two structural domains, F(1) containing the extramembraneous catalytic core and F(0) containing the membrane proton channel, linked together by a central stalk and a peripheral stalk. During catalysis, ATP synthesis in the catalytic domain of F(1) is coupled via a rotary mechanism of the central stalk subunits to proton translocation.</text>
</comment>
<comment type="function">
    <text evidence="1">This protein is part of the stalk that links CF(0) to CF(1). It either transmits conformational changes from CF(0) to CF(1) or is implicated in proton conduction.</text>
</comment>
<comment type="subunit">
    <text evidence="1">F-type ATPases have 2 components, F(1) - the catalytic core - and F(0) - the membrane proton channel. F(1) has five subunits: alpha(3), beta(3), gamma(1), delta(1), epsilon(1). F(0) has three main subunits: a(1), b(2) and c(10-14). The alpha and beta chains form an alternating ring which encloses part of the gamma chain. F(1) is attached to F(0) by a central stalk formed by the gamma and epsilon chains, while a peripheral stalk is formed by the delta and b chains.</text>
</comment>
<comment type="subcellular location">
    <subcellularLocation>
        <location evidence="1">Cell inner membrane</location>
        <topology evidence="1">Peripheral membrane protein</topology>
    </subcellularLocation>
</comment>
<comment type="similarity">
    <text evidence="1">Belongs to the ATPase delta chain family.</text>
</comment>
<proteinExistence type="inferred from homology"/>
<gene>
    <name evidence="1" type="primary">atpH</name>
    <name type="ordered locus">RP804</name>
</gene>
<organism>
    <name type="scientific">Rickettsia prowazekii (strain Madrid E)</name>
    <dbReference type="NCBI Taxonomy" id="272947"/>
    <lineage>
        <taxon>Bacteria</taxon>
        <taxon>Pseudomonadati</taxon>
        <taxon>Pseudomonadota</taxon>
        <taxon>Alphaproteobacteria</taxon>
        <taxon>Rickettsiales</taxon>
        <taxon>Rickettsiaceae</taxon>
        <taxon>Rickettsieae</taxon>
        <taxon>Rickettsia</taxon>
        <taxon>typhus group</taxon>
    </lineage>
</organism>
<keyword id="KW-0066">ATP synthesis</keyword>
<keyword id="KW-0997">Cell inner membrane</keyword>
<keyword id="KW-1003">Cell membrane</keyword>
<keyword id="KW-0139">CF(1)</keyword>
<keyword id="KW-0375">Hydrogen ion transport</keyword>
<keyword id="KW-0406">Ion transport</keyword>
<keyword id="KW-0472">Membrane</keyword>
<keyword id="KW-1185">Reference proteome</keyword>
<keyword id="KW-0813">Transport</keyword>
<accession>Q9ZCF2</accession>
<evidence type="ECO:0000255" key="1">
    <source>
        <dbReference type="HAMAP-Rule" id="MF_01416"/>
    </source>
</evidence>